<reference key="1">
    <citation type="journal article" date="2006" name="J. Bacteriol.">
        <title>Whole-genome sequence of Listeria welshimeri reveals common steps in genome reduction with Listeria innocua as compared to Listeria monocytogenes.</title>
        <authorList>
            <person name="Hain T."/>
            <person name="Steinweg C."/>
            <person name="Kuenne C.T."/>
            <person name="Billion A."/>
            <person name="Ghai R."/>
            <person name="Chatterjee S.S."/>
            <person name="Domann E."/>
            <person name="Kaerst U."/>
            <person name="Goesmann A."/>
            <person name="Bekel T."/>
            <person name="Bartels D."/>
            <person name="Kaiser O."/>
            <person name="Meyer F."/>
            <person name="Puehler A."/>
            <person name="Weisshaar B."/>
            <person name="Wehland J."/>
            <person name="Liang C."/>
            <person name="Dandekar T."/>
            <person name="Lampidis R."/>
            <person name="Kreft J."/>
            <person name="Goebel W."/>
            <person name="Chakraborty T."/>
        </authorList>
    </citation>
    <scope>NUCLEOTIDE SEQUENCE [LARGE SCALE GENOMIC DNA]</scope>
    <source>
        <strain>ATCC 35897 / DSM 20650 / CCUG 15529 / CIP 8149 / NCTC 11857 / SLCC 5334 / V8</strain>
    </source>
</reference>
<evidence type="ECO:0000255" key="1">
    <source>
        <dbReference type="HAMAP-Rule" id="MF_01225"/>
    </source>
</evidence>
<evidence type="ECO:0000255" key="2">
    <source>
        <dbReference type="PROSITE-ProRule" id="PRU01266"/>
    </source>
</evidence>
<comment type="function">
    <text evidence="1">Catalyzes the cyclization of GTP to (8S)-3',8-cyclo-7,8-dihydroguanosine 5'-triphosphate.</text>
</comment>
<comment type="catalytic activity">
    <reaction evidence="1">
        <text>GTP + AH2 + S-adenosyl-L-methionine = (8S)-3',8-cyclo-7,8-dihydroguanosine 5'-triphosphate + 5'-deoxyadenosine + L-methionine + A + H(+)</text>
        <dbReference type="Rhea" id="RHEA:49576"/>
        <dbReference type="ChEBI" id="CHEBI:13193"/>
        <dbReference type="ChEBI" id="CHEBI:15378"/>
        <dbReference type="ChEBI" id="CHEBI:17319"/>
        <dbReference type="ChEBI" id="CHEBI:17499"/>
        <dbReference type="ChEBI" id="CHEBI:37565"/>
        <dbReference type="ChEBI" id="CHEBI:57844"/>
        <dbReference type="ChEBI" id="CHEBI:59789"/>
        <dbReference type="ChEBI" id="CHEBI:131766"/>
        <dbReference type="EC" id="4.1.99.22"/>
    </reaction>
</comment>
<comment type="cofactor">
    <cofactor evidence="1">
        <name>[4Fe-4S] cluster</name>
        <dbReference type="ChEBI" id="CHEBI:49883"/>
    </cofactor>
    <text evidence="1">Binds 2 [4Fe-4S] clusters. Binds 1 [4Fe-4S] cluster coordinated with 3 cysteines and an exchangeable S-adenosyl-L-methionine and 1 [4Fe-4S] cluster coordinated with 3 cysteines and the GTP-derived substrate.</text>
</comment>
<comment type="pathway">
    <text evidence="1">Cofactor biosynthesis; molybdopterin biosynthesis.</text>
</comment>
<comment type="subunit">
    <text evidence="1">Monomer and homodimer.</text>
</comment>
<comment type="similarity">
    <text evidence="1">Belongs to the radical SAM superfamily. MoaA family.</text>
</comment>
<proteinExistence type="inferred from homology"/>
<feature type="chain" id="PRO_1000054197" description="GTP 3',8-cyclase">
    <location>
        <begin position="1"/>
        <end position="333"/>
    </location>
</feature>
<feature type="domain" description="Radical SAM core" evidence="2">
    <location>
        <begin position="7"/>
        <end position="221"/>
    </location>
</feature>
<feature type="binding site" evidence="1">
    <location>
        <position position="16"/>
    </location>
    <ligand>
        <name>GTP</name>
        <dbReference type="ChEBI" id="CHEBI:37565"/>
    </ligand>
</feature>
<feature type="binding site" evidence="1">
    <location>
        <position position="23"/>
    </location>
    <ligand>
        <name>[4Fe-4S] cluster</name>
        <dbReference type="ChEBI" id="CHEBI:49883"/>
        <label>1</label>
        <note>4Fe-4S-S-AdoMet</note>
    </ligand>
</feature>
<feature type="binding site" evidence="1">
    <location>
        <position position="27"/>
    </location>
    <ligand>
        <name>[4Fe-4S] cluster</name>
        <dbReference type="ChEBI" id="CHEBI:49883"/>
        <label>1</label>
        <note>4Fe-4S-S-AdoMet</note>
    </ligand>
</feature>
<feature type="binding site" evidence="1">
    <location>
        <position position="29"/>
    </location>
    <ligand>
        <name>S-adenosyl-L-methionine</name>
        <dbReference type="ChEBI" id="CHEBI:59789"/>
    </ligand>
</feature>
<feature type="binding site" evidence="1">
    <location>
        <position position="30"/>
    </location>
    <ligand>
        <name>[4Fe-4S] cluster</name>
        <dbReference type="ChEBI" id="CHEBI:49883"/>
        <label>1</label>
        <note>4Fe-4S-S-AdoMet</note>
    </ligand>
</feature>
<feature type="binding site" evidence="1">
    <location>
        <position position="66"/>
    </location>
    <ligand>
        <name>GTP</name>
        <dbReference type="ChEBI" id="CHEBI:37565"/>
    </ligand>
</feature>
<feature type="binding site" evidence="1">
    <location>
        <position position="70"/>
    </location>
    <ligand>
        <name>S-adenosyl-L-methionine</name>
        <dbReference type="ChEBI" id="CHEBI:59789"/>
    </ligand>
</feature>
<feature type="binding site" evidence="1">
    <location>
        <position position="97"/>
    </location>
    <ligand>
        <name>GTP</name>
        <dbReference type="ChEBI" id="CHEBI:37565"/>
    </ligand>
</feature>
<feature type="binding site" evidence="1">
    <location>
        <position position="121"/>
    </location>
    <ligand>
        <name>S-adenosyl-L-methionine</name>
        <dbReference type="ChEBI" id="CHEBI:59789"/>
    </ligand>
</feature>
<feature type="binding site" evidence="1">
    <location>
        <position position="158"/>
    </location>
    <ligand>
        <name>GTP</name>
        <dbReference type="ChEBI" id="CHEBI:37565"/>
    </ligand>
</feature>
<feature type="binding site" evidence="1">
    <location>
        <position position="192"/>
    </location>
    <ligand>
        <name>S-adenosyl-L-methionine</name>
        <dbReference type="ChEBI" id="CHEBI:59789"/>
    </ligand>
</feature>
<feature type="binding site" evidence="1">
    <location>
        <position position="257"/>
    </location>
    <ligand>
        <name>[4Fe-4S] cluster</name>
        <dbReference type="ChEBI" id="CHEBI:49883"/>
        <label>2</label>
        <note>4Fe-4S-substrate</note>
    </ligand>
</feature>
<feature type="binding site" evidence="1">
    <location>
        <position position="260"/>
    </location>
    <ligand>
        <name>[4Fe-4S] cluster</name>
        <dbReference type="ChEBI" id="CHEBI:49883"/>
        <label>2</label>
        <note>4Fe-4S-substrate</note>
    </ligand>
</feature>
<feature type="binding site" evidence="1">
    <location>
        <begin position="262"/>
        <end position="264"/>
    </location>
    <ligand>
        <name>GTP</name>
        <dbReference type="ChEBI" id="CHEBI:37565"/>
    </ligand>
</feature>
<feature type="binding site" evidence="1">
    <location>
        <position position="274"/>
    </location>
    <ligand>
        <name>[4Fe-4S] cluster</name>
        <dbReference type="ChEBI" id="CHEBI:49883"/>
        <label>2</label>
        <note>4Fe-4S-substrate</note>
    </ligand>
</feature>
<gene>
    <name evidence="1" type="primary">moaA</name>
    <name type="ordered locus">lwe1024</name>
</gene>
<name>MOAA_LISW6</name>
<protein>
    <recommendedName>
        <fullName evidence="1">GTP 3',8-cyclase</fullName>
        <ecNumber evidence="1">4.1.99.22</ecNumber>
    </recommendedName>
    <alternativeName>
        <fullName evidence="1">Molybdenum cofactor biosynthesis protein A</fullName>
    </alternativeName>
</protein>
<keyword id="KW-0004">4Fe-4S</keyword>
<keyword id="KW-0342">GTP-binding</keyword>
<keyword id="KW-0408">Iron</keyword>
<keyword id="KW-0411">Iron-sulfur</keyword>
<keyword id="KW-0456">Lyase</keyword>
<keyword id="KW-0479">Metal-binding</keyword>
<keyword id="KW-0501">Molybdenum cofactor biosynthesis</keyword>
<keyword id="KW-0547">Nucleotide-binding</keyword>
<keyword id="KW-0949">S-adenosyl-L-methionine</keyword>
<accession>A0AHG0</accession>
<organism>
    <name type="scientific">Listeria welshimeri serovar 6b (strain ATCC 35897 / DSM 20650 / CCUG 15529 / CIP 8149 / NCTC 11857 / SLCC 5334 / V8)</name>
    <dbReference type="NCBI Taxonomy" id="386043"/>
    <lineage>
        <taxon>Bacteria</taxon>
        <taxon>Bacillati</taxon>
        <taxon>Bacillota</taxon>
        <taxon>Bacilli</taxon>
        <taxon>Bacillales</taxon>
        <taxon>Listeriaceae</taxon>
        <taxon>Listeria</taxon>
    </lineage>
</organism>
<sequence>MQLLKDKFGRVHDYIRISVTDRCNLRCVYCMPEEGLTFLPHEKVLSKDEIVSFMELMVQFGIKKVRITGGEPLLRTDIVEIVRGLGAIPEIEDISITTNAMYLAKKAEALKEAGLTRVNISLDSLHADRFQAITRGGRLQKVLDGIQKAEEVGLFPIKLNVVLIKGQNDDEITDFLKFTKDKDINIRFIEYMPIGHAGTSWKEKYLPLDTIFEACDAIGFEYEAVDSIRGNGPSENFRIKGAKGTFGVIHPVSSHFCDSCNRLRLTADGYIKACLYWDEEMNIRPFIHEPVKLMQLVQKAIDNKPENHEMALKLQDEVQSNKPTWRRMSQIGG</sequence>
<dbReference type="EC" id="4.1.99.22" evidence="1"/>
<dbReference type="EMBL" id="AM263198">
    <property type="protein sequence ID" value="CAK20442.1"/>
    <property type="molecule type" value="Genomic_DNA"/>
</dbReference>
<dbReference type="RefSeq" id="WP_011701849.1">
    <property type="nucleotide sequence ID" value="NC_008555.1"/>
</dbReference>
<dbReference type="SMR" id="A0AHG0"/>
<dbReference type="STRING" id="386043.lwe1024"/>
<dbReference type="GeneID" id="61188914"/>
<dbReference type="KEGG" id="lwe:lwe1024"/>
<dbReference type="eggNOG" id="COG2896">
    <property type="taxonomic scope" value="Bacteria"/>
</dbReference>
<dbReference type="HOGENOM" id="CLU_009273_0_1_9"/>
<dbReference type="OrthoDB" id="9763993at2"/>
<dbReference type="UniPathway" id="UPA00344"/>
<dbReference type="Proteomes" id="UP000000779">
    <property type="component" value="Chromosome"/>
</dbReference>
<dbReference type="GO" id="GO:0051539">
    <property type="term" value="F:4 iron, 4 sulfur cluster binding"/>
    <property type="evidence" value="ECO:0007669"/>
    <property type="project" value="UniProtKB-UniRule"/>
</dbReference>
<dbReference type="GO" id="GO:0061799">
    <property type="term" value="F:cyclic pyranopterin monophosphate synthase activity"/>
    <property type="evidence" value="ECO:0007669"/>
    <property type="project" value="TreeGrafter"/>
</dbReference>
<dbReference type="GO" id="GO:0061798">
    <property type="term" value="F:GTP 3',8'-cyclase activity"/>
    <property type="evidence" value="ECO:0007669"/>
    <property type="project" value="UniProtKB-UniRule"/>
</dbReference>
<dbReference type="GO" id="GO:0005525">
    <property type="term" value="F:GTP binding"/>
    <property type="evidence" value="ECO:0007669"/>
    <property type="project" value="UniProtKB-UniRule"/>
</dbReference>
<dbReference type="GO" id="GO:0046872">
    <property type="term" value="F:metal ion binding"/>
    <property type="evidence" value="ECO:0007669"/>
    <property type="project" value="UniProtKB-KW"/>
</dbReference>
<dbReference type="GO" id="GO:1904047">
    <property type="term" value="F:S-adenosyl-L-methionine binding"/>
    <property type="evidence" value="ECO:0007669"/>
    <property type="project" value="UniProtKB-UniRule"/>
</dbReference>
<dbReference type="GO" id="GO:0006777">
    <property type="term" value="P:Mo-molybdopterin cofactor biosynthetic process"/>
    <property type="evidence" value="ECO:0007669"/>
    <property type="project" value="UniProtKB-UniRule"/>
</dbReference>
<dbReference type="CDD" id="cd01335">
    <property type="entry name" value="Radical_SAM"/>
    <property type="match status" value="1"/>
</dbReference>
<dbReference type="CDD" id="cd21117">
    <property type="entry name" value="Twitch_MoaA"/>
    <property type="match status" value="1"/>
</dbReference>
<dbReference type="Gene3D" id="3.20.20.70">
    <property type="entry name" value="Aldolase class I"/>
    <property type="match status" value="1"/>
</dbReference>
<dbReference type="HAMAP" id="MF_01225_B">
    <property type="entry name" value="MoaA_B"/>
    <property type="match status" value="1"/>
</dbReference>
<dbReference type="InterPro" id="IPR013785">
    <property type="entry name" value="Aldolase_TIM"/>
</dbReference>
<dbReference type="InterPro" id="IPR006638">
    <property type="entry name" value="Elp3/MiaA/NifB-like_rSAM"/>
</dbReference>
<dbReference type="InterPro" id="IPR013483">
    <property type="entry name" value="MoaA"/>
</dbReference>
<dbReference type="InterPro" id="IPR000385">
    <property type="entry name" value="MoaA_NifB_PqqE_Fe-S-bd_CS"/>
</dbReference>
<dbReference type="InterPro" id="IPR010505">
    <property type="entry name" value="MoaA_twitch"/>
</dbReference>
<dbReference type="InterPro" id="IPR050105">
    <property type="entry name" value="MoCo_biosynth_MoaA/MoaC"/>
</dbReference>
<dbReference type="InterPro" id="IPR007197">
    <property type="entry name" value="rSAM"/>
</dbReference>
<dbReference type="NCBIfam" id="TIGR02666">
    <property type="entry name" value="moaA"/>
    <property type="match status" value="1"/>
</dbReference>
<dbReference type="NCBIfam" id="NF001199">
    <property type="entry name" value="PRK00164.2-1"/>
    <property type="match status" value="1"/>
</dbReference>
<dbReference type="PANTHER" id="PTHR22960:SF0">
    <property type="entry name" value="MOLYBDENUM COFACTOR BIOSYNTHESIS PROTEIN 1"/>
    <property type="match status" value="1"/>
</dbReference>
<dbReference type="PANTHER" id="PTHR22960">
    <property type="entry name" value="MOLYBDOPTERIN COFACTOR SYNTHESIS PROTEIN A"/>
    <property type="match status" value="1"/>
</dbReference>
<dbReference type="Pfam" id="PF06463">
    <property type="entry name" value="Mob_synth_C"/>
    <property type="match status" value="1"/>
</dbReference>
<dbReference type="Pfam" id="PF04055">
    <property type="entry name" value="Radical_SAM"/>
    <property type="match status" value="1"/>
</dbReference>
<dbReference type="SFLD" id="SFLDG01383">
    <property type="entry name" value="cyclic_pyranopterin_phosphate"/>
    <property type="match status" value="1"/>
</dbReference>
<dbReference type="SFLD" id="SFLDG01216">
    <property type="entry name" value="thioether_bond_formation_requi"/>
    <property type="match status" value="1"/>
</dbReference>
<dbReference type="SMART" id="SM00729">
    <property type="entry name" value="Elp3"/>
    <property type="match status" value="1"/>
</dbReference>
<dbReference type="SUPFAM" id="SSF102114">
    <property type="entry name" value="Radical SAM enzymes"/>
    <property type="match status" value="1"/>
</dbReference>
<dbReference type="PROSITE" id="PS01305">
    <property type="entry name" value="MOAA_NIFB_PQQE"/>
    <property type="match status" value="1"/>
</dbReference>
<dbReference type="PROSITE" id="PS51918">
    <property type="entry name" value="RADICAL_SAM"/>
    <property type="match status" value="1"/>
</dbReference>